<evidence type="ECO:0000255" key="1">
    <source>
        <dbReference type="HAMAP-Rule" id="MF_00815"/>
    </source>
</evidence>
<organism>
    <name type="scientific">Desulfotalea psychrophila (strain LSv54 / DSM 12343)</name>
    <dbReference type="NCBI Taxonomy" id="177439"/>
    <lineage>
        <taxon>Bacteria</taxon>
        <taxon>Pseudomonadati</taxon>
        <taxon>Thermodesulfobacteriota</taxon>
        <taxon>Desulfobulbia</taxon>
        <taxon>Desulfobulbales</taxon>
        <taxon>Desulfocapsaceae</taxon>
        <taxon>Desulfotalea</taxon>
    </lineage>
</organism>
<keyword id="KW-0066">ATP synthesis</keyword>
<keyword id="KW-0997">Cell inner membrane</keyword>
<keyword id="KW-1003">Cell membrane</keyword>
<keyword id="KW-0139">CF(1)</keyword>
<keyword id="KW-0375">Hydrogen ion transport</keyword>
<keyword id="KW-0406">Ion transport</keyword>
<keyword id="KW-0472">Membrane</keyword>
<keyword id="KW-1185">Reference proteome</keyword>
<keyword id="KW-0813">Transport</keyword>
<sequence length="290" mass="31480">MPSLKEVKTKITGVKKTSQITKAMNMVAASRLRGAQDKMESFRPYASKFSEAMSNLSGGGNTNAFPLMDVRDVKTVELIVVTSDRGLCGSFNANVVKLTEKKMAQYRAEGKKVSLICIGKKGYQLLRKSGAVRENYSDIMAHFSINNAREIASDVADNFLKGTADKVEIIYGAFKSVAVQAPVAEDLLPIQPVVSSEPAGEQTMSGDYIYEPSSEEIMDAMQPLYLNVLVYHAMLEVGASEHAARMTAMDNATTACRDIVSNLTIVYNKARQAAVTNELMDIVGGAEALK</sequence>
<reference key="1">
    <citation type="journal article" date="2004" name="Environ. Microbiol.">
        <title>The genome of Desulfotalea psychrophila, a sulfate-reducing bacterium from permanently cold Arctic sediments.</title>
        <authorList>
            <person name="Rabus R."/>
            <person name="Ruepp A."/>
            <person name="Frickey T."/>
            <person name="Rattei T."/>
            <person name="Fartmann B."/>
            <person name="Stark M."/>
            <person name="Bauer M."/>
            <person name="Zibat A."/>
            <person name="Lombardot T."/>
            <person name="Becker I."/>
            <person name="Amann J."/>
            <person name="Gellner K."/>
            <person name="Teeling H."/>
            <person name="Leuschner W.D."/>
            <person name="Gloeckner F.-O."/>
            <person name="Lupas A.N."/>
            <person name="Amann R."/>
            <person name="Klenk H.-P."/>
        </authorList>
    </citation>
    <scope>NUCLEOTIDE SEQUENCE [LARGE SCALE GENOMIC DNA]</scope>
    <source>
        <strain>DSM 12343 / LSv54</strain>
    </source>
</reference>
<protein>
    <recommendedName>
        <fullName evidence="1">ATP synthase gamma chain</fullName>
    </recommendedName>
    <alternativeName>
        <fullName evidence="1">ATP synthase F1 sector gamma subunit</fullName>
    </alternativeName>
    <alternativeName>
        <fullName evidence="1">F-ATPase gamma subunit</fullName>
    </alternativeName>
</protein>
<comment type="function">
    <text evidence="1">Produces ATP from ADP in the presence of a proton gradient across the membrane. The gamma chain is believed to be important in regulating ATPase activity and the flow of protons through the CF(0) complex.</text>
</comment>
<comment type="subunit">
    <text evidence="1">F-type ATPases have 2 components, CF(1) - the catalytic core - and CF(0) - the membrane proton channel. CF(1) has five subunits: alpha(3), beta(3), gamma(1), delta(1), epsilon(1). CF(0) has three main subunits: a, b and c.</text>
</comment>
<comment type="subcellular location">
    <subcellularLocation>
        <location evidence="1">Cell inner membrane</location>
        <topology evidence="1">Peripheral membrane protein</topology>
    </subcellularLocation>
</comment>
<comment type="similarity">
    <text evidence="1">Belongs to the ATPase gamma chain family.</text>
</comment>
<proteinExistence type="inferred from homology"/>
<dbReference type="EMBL" id="CR522870">
    <property type="protein sequence ID" value="CAG35562.1"/>
    <property type="molecule type" value="Genomic_DNA"/>
</dbReference>
<dbReference type="RefSeq" id="WP_011188078.1">
    <property type="nucleotide sequence ID" value="NC_006138.1"/>
</dbReference>
<dbReference type="SMR" id="Q6AQ11"/>
<dbReference type="STRING" id="177439.DP0833"/>
<dbReference type="KEGG" id="dps:DP0833"/>
<dbReference type="eggNOG" id="COG0224">
    <property type="taxonomic scope" value="Bacteria"/>
</dbReference>
<dbReference type="HOGENOM" id="CLU_050669_0_1_7"/>
<dbReference type="OrthoDB" id="9812769at2"/>
<dbReference type="Proteomes" id="UP000000602">
    <property type="component" value="Chromosome"/>
</dbReference>
<dbReference type="GO" id="GO:0005886">
    <property type="term" value="C:plasma membrane"/>
    <property type="evidence" value="ECO:0007669"/>
    <property type="project" value="UniProtKB-SubCell"/>
</dbReference>
<dbReference type="GO" id="GO:0045259">
    <property type="term" value="C:proton-transporting ATP synthase complex"/>
    <property type="evidence" value="ECO:0007669"/>
    <property type="project" value="UniProtKB-KW"/>
</dbReference>
<dbReference type="GO" id="GO:0005524">
    <property type="term" value="F:ATP binding"/>
    <property type="evidence" value="ECO:0007669"/>
    <property type="project" value="UniProtKB-UniRule"/>
</dbReference>
<dbReference type="GO" id="GO:0046933">
    <property type="term" value="F:proton-transporting ATP synthase activity, rotational mechanism"/>
    <property type="evidence" value="ECO:0007669"/>
    <property type="project" value="UniProtKB-UniRule"/>
</dbReference>
<dbReference type="GO" id="GO:0042777">
    <property type="term" value="P:proton motive force-driven plasma membrane ATP synthesis"/>
    <property type="evidence" value="ECO:0007669"/>
    <property type="project" value="UniProtKB-UniRule"/>
</dbReference>
<dbReference type="CDD" id="cd12151">
    <property type="entry name" value="F1-ATPase_gamma"/>
    <property type="match status" value="1"/>
</dbReference>
<dbReference type="Gene3D" id="3.40.1380.10">
    <property type="match status" value="1"/>
</dbReference>
<dbReference type="Gene3D" id="1.10.287.80">
    <property type="entry name" value="ATP synthase, gamma subunit, helix hairpin domain"/>
    <property type="match status" value="2"/>
</dbReference>
<dbReference type="HAMAP" id="MF_00815">
    <property type="entry name" value="ATP_synth_gamma_bact"/>
    <property type="match status" value="1"/>
</dbReference>
<dbReference type="InterPro" id="IPR035968">
    <property type="entry name" value="ATP_synth_F1_ATPase_gsu"/>
</dbReference>
<dbReference type="InterPro" id="IPR000131">
    <property type="entry name" value="ATP_synth_F1_gsu"/>
</dbReference>
<dbReference type="InterPro" id="IPR023632">
    <property type="entry name" value="ATP_synth_F1_gsu_CS"/>
</dbReference>
<dbReference type="NCBIfam" id="TIGR01146">
    <property type="entry name" value="ATPsyn_F1gamma"/>
    <property type="match status" value="1"/>
</dbReference>
<dbReference type="PANTHER" id="PTHR11693">
    <property type="entry name" value="ATP SYNTHASE GAMMA CHAIN"/>
    <property type="match status" value="1"/>
</dbReference>
<dbReference type="PANTHER" id="PTHR11693:SF22">
    <property type="entry name" value="ATP SYNTHASE SUBUNIT GAMMA, MITOCHONDRIAL"/>
    <property type="match status" value="1"/>
</dbReference>
<dbReference type="Pfam" id="PF00231">
    <property type="entry name" value="ATP-synt"/>
    <property type="match status" value="1"/>
</dbReference>
<dbReference type="PRINTS" id="PR00126">
    <property type="entry name" value="ATPASEGAMMA"/>
</dbReference>
<dbReference type="SUPFAM" id="SSF52943">
    <property type="entry name" value="ATP synthase (F1-ATPase), gamma subunit"/>
    <property type="match status" value="1"/>
</dbReference>
<dbReference type="PROSITE" id="PS00153">
    <property type="entry name" value="ATPASE_GAMMA"/>
    <property type="match status" value="1"/>
</dbReference>
<feature type="chain" id="PRO_0000073276" description="ATP synthase gamma chain">
    <location>
        <begin position="1"/>
        <end position="290"/>
    </location>
</feature>
<gene>
    <name evidence="1" type="primary">atpG</name>
    <name type="ordered locus">DP0833</name>
</gene>
<name>ATPG_DESPS</name>
<accession>Q6AQ11</accession>